<comment type="function">
    <text evidence="1">Seems to be required for the assembly of the photosystem I complex.</text>
</comment>
<comment type="subcellular location">
    <subcellularLocation>
        <location evidence="1">Cellular thylakoid membrane</location>
        <topology evidence="1">Multi-pass membrane protein</topology>
    </subcellularLocation>
</comment>
<comment type="similarity">
    <text evidence="1">Belongs to the Ycf4 family.</text>
</comment>
<accession>B8HY04</accession>
<gene>
    <name evidence="1" type="primary">ycf4</name>
    <name type="ordered locus">Cyan7425_1057</name>
</gene>
<sequence length="188" mass="20763">MTSPTVSTDRPVLRYEVLGSRRFSNYWWATVITIGGTGFFLAGLSSYLHVNLLPIGNPVELFFIPQGIAIGFYGVAALLLAIYLWATIGWNVGGGYNEFNKETGIVRIFRWGFPGKNRQVEISARIPDVQAVRIVIREGVNPKRTIYLRLKGRGDIPLTRVGQPIPLTDLENQAAEIASFLGVAIEGL</sequence>
<proteinExistence type="inferred from homology"/>
<dbReference type="EMBL" id="CP001344">
    <property type="protein sequence ID" value="ACL43443.1"/>
    <property type="molecule type" value="Genomic_DNA"/>
</dbReference>
<dbReference type="SMR" id="B8HY04"/>
<dbReference type="STRING" id="395961.Cyan7425_1057"/>
<dbReference type="KEGG" id="cyn:Cyan7425_1057"/>
<dbReference type="eggNOG" id="ENOG502Z7YX">
    <property type="taxonomic scope" value="Bacteria"/>
</dbReference>
<dbReference type="HOGENOM" id="CLU_095465_0_0_3"/>
<dbReference type="OrthoDB" id="7059574at2"/>
<dbReference type="GO" id="GO:0009522">
    <property type="term" value="C:photosystem I"/>
    <property type="evidence" value="ECO:0007669"/>
    <property type="project" value="InterPro"/>
</dbReference>
<dbReference type="GO" id="GO:0031676">
    <property type="term" value="C:plasma membrane-derived thylakoid membrane"/>
    <property type="evidence" value="ECO:0007669"/>
    <property type="project" value="UniProtKB-SubCell"/>
</dbReference>
<dbReference type="GO" id="GO:0015979">
    <property type="term" value="P:photosynthesis"/>
    <property type="evidence" value="ECO:0007669"/>
    <property type="project" value="UniProtKB-UniRule"/>
</dbReference>
<dbReference type="HAMAP" id="MF_00437">
    <property type="entry name" value="Ycf4"/>
    <property type="match status" value="1"/>
</dbReference>
<dbReference type="InterPro" id="IPR003359">
    <property type="entry name" value="PSI_Ycf4_assembly"/>
</dbReference>
<dbReference type="NCBIfam" id="NF002712">
    <property type="entry name" value="PRK02542.1"/>
    <property type="match status" value="1"/>
</dbReference>
<dbReference type="PANTHER" id="PTHR33288">
    <property type="match status" value="1"/>
</dbReference>
<dbReference type="PANTHER" id="PTHR33288:SF4">
    <property type="entry name" value="PHOTOSYSTEM I ASSEMBLY PROTEIN YCF4"/>
    <property type="match status" value="1"/>
</dbReference>
<dbReference type="Pfam" id="PF02392">
    <property type="entry name" value="Ycf4"/>
    <property type="match status" value="1"/>
</dbReference>
<keyword id="KW-0472">Membrane</keyword>
<keyword id="KW-0602">Photosynthesis</keyword>
<keyword id="KW-0793">Thylakoid</keyword>
<keyword id="KW-0812">Transmembrane</keyword>
<keyword id="KW-1133">Transmembrane helix</keyword>
<name>YCF4_CYAP4</name>
<feature type="chain" id="PRO_1000200327" description="Photosystem I assembly protein Ycf4">
    <location>
        <begin position="1"/>
        <end position="188"/>
    </location>
</feature>
<feature type="transmembrane region" description="Helical" evidence="1">
    <location>
        <begin position="28"/>
        <end position="48"/>
    </location>
</feature>
<feature type="transmembrane region" description="Helical" evidence="1">
    <location>
        <begin position="68"/>
        <end position="88"/>
    </location>
</feature>
<protein>
    <recommendedName>
        <fullName evidence="1">Photosystem I assembly protein Ycf4</fullName>
    </recommendedName>
</protein>
<reference key="1">
    <citation type="journal article" date="2011" name="MBio">
        <title>Novel metabolic attributes of the genus Cyanothece, comprising a group of unicellular nitrogen-fixing Cyanobacteria.</title>
        <authorList>
            <person name="Bandyopadhyay A."/>
            <person name="Elvitigala T."/>
            <person name="Welsh E."/>
            <person name="Stockel J."/>
            <person name="Liberton M."/>
            <person name="Min H."/>
            <person name="Sherman L.A."/>
            <person name="Pakrasi H.B."/>
        </authorList>
    </citation>
    <scope>NUCLEOTIDE SEQUENCE [LARGE SCALE GENOMIC DNA]</scope>
    <source>
        <strain>PCC 7425 / ATCC 29141</strain>
    </source>
</reference>
<organism>
    <name type="scientific">Cyanothece sp. (strain PCC 7425 / ATCC 29141)</name>
    <dbReference type="NCBI Taxonomy" id="395961"/>
    <lineage>
        <taxon>Bacteria</taxon>
        <taxon>Bacillati</taxon>
        <taxon>Cyanobacteriota</taxon>
        <taxon>Cyanophyceae</taxon>
        <taxon>Gomontiellales</taxon>
        <taxon>Cyanothecaceae</taxon>
        <taxon>Cyanothece</taxon>
    </lineage>
</organism>
<evidence type="ECO:0000255" key="1">
    <source>
        <dbReference type="HAMAP-Rule" id="MF_00437"/>
    </source>
</evidence>